<protein>
    <recommendedName>
        <fullName evidence="1">Digeranylgeranylglyceryl phosphate synthase</fullName>
        <shortName evidence="1">DGGGP synthase</shortName>
        <shortName evidence="1">DGGGPS</shortName>
        <ecNumber evidence="1">2.5.1.42</ecNumber>
    </recommendedName>
    <alternativeName>
        <fullName evidence="1">(S)-2,3-di-O-geranylgeranylglyceryl phosphate synthase</fullName>
    </alternativeName>
    <alternativeName>
        <fullName evidence="1">Geranylgeranylglycerol-phosphate geranylgeranyltransferase</fullName>
    </alternativeName>
</protein>
<accession>Q9V2P5</accession>
<accession>G8ZFK8</accession>
<reference key="1">
    <citation type="journal article" date="2003" name="Mol. Microbiol.">
        <title>An integrated analysis of the genome of the hyperthermophilic archaeon Pyrococcus abyssi.</title>
        <authorList>
            <person name="Cohen G.N."/>
            <person name="Barbe V."/>
            <person name="Flament D."/>
            <person name="Galperin M."/>
            <person name="Heilig R."/>
            <person name="Lecompte O."/>
            <person name="Poch O."/>
            <person name="Prieur D."/>
            <person name="Querellou J."/>
            <person name="Ripp R."/>
            <person name="Thierry J.-C."/>
            <person name="Van der Oost J."/>
            <person name="Weissenbach J."/>
            <person name="Zivanovic Y."/>
            <person name="Forterre P."/>
        </authorList>
    </citation>
    <scope>NUCLEOTIDE SEQUENCE [LARGE SCALE GENOMIC DNA]</scope>
    <source>
        <strain>GE5 / Orsay</strain>
    </source>
</reference>
<reference key="2">
    <citation type="journal article" date="2012" name="Curr. Microbiol.">
        <title>Re-annotation of two hyperthermophilic archaea Pyrococcus abyssi GE5 and Pyrococcus furiosus DSM 3638.</title>
        <authorList>
            <person name="Gao J."/>
            <person name="Wang J."/>
        </authorList>
    </citation>
    <scope>GENOME REANNOTATION</scope>
    <source>
        <strain>GE5 / Orsay</strain>
    </source>
</reference>
<sequence length="277" mass="29617">MEVKAFIEIMRPHNCILAGVVGILGSLVAYEGIPSIEKLGLVFLVVYLGCSAGNTINDYFDVEIDRVNRPNRPIPRGAIPRKVALYYALLQYMLGLALARFLGVEALLFALGAYALTFIYAWKLKPLPFIGNVAVALLTAATPIYGALGVGRVGLAGYLAICAFLVNVSREIMKDIEDIEGDMKMGAKTLPIIIGKRRAAMISSIFGVLTVITSFLPVKVGIGLGYAPIILVDAMILKASIDVVKNPESASKGQKTLKIATFIAVISFLLGALTKGV</sequence>
<name>DGGGP_PYRAB</name>
<dbReference type="EC" id="2.5.1.42" evidence="1"/>
<dbReference type="EMBL" id="AJ248283">
    <property type="protein sequence ID" value="CAB48953.1"/>
    <property type="status" value="ALT_INIT"/>
    <property type="molecule type" value="Genomic_DNA"/>
</dbReference>
<dbReference type="EMBL" id="HE613800">
    <property type="protein sequence ID" value="CCE69399.1"/>
    <property type="molecule type" value="Genomic_DNA"/>
</dbReference>
<dbReference type="PIR" id="B75188">
    <property type="entry name" value="B75188"/>
</dbReference>
<dbReference type="RefSeq" id="WP_010867154.1">
    <property type="nucleotide sequence ID" value="NC_000868.1"/>
</dbReference>
<dbReference type="SMR" id="Q9V2P5"/>
<dbReference type="STRING" id="272844.PAB0018"/>
<dbReference type="KEGG" id="pab:PAB0018"/>
<dbReference type="PATRIC" id="fig|272844.11.peg.33"/>
<dbReference type="eggNOG" id="arCOG00476">
    <property type="taxonomic scope" value="Archaea"/>
</dbReference>
<dbReference type="HOGENOM" id="CLU_073311_1_1_2"/>
<dbReference type="OrthoDB" id="11851at2157"/>
<dbReference type="UniPathway" id="UPA00940"/>
<dbReference type="Proteomes" id="UP000000810">
    <property type="component" value="Chromosome"/>
</dbReference>
<dbReference type="Proteomes" id="UP000009139">
    <property type="component" value="Chromosome"/>
</dbReference>
<dbReference type="GO" id="GO:0005886">
    <property type="term" value="C:plasma membrane"/>
    <property type="evidence" value="ECO:0007669"/>
    <property type="project" value="UniProtKB-SubCell"/>
</dbReference>
<dbReference type="GO" id="GO:0047295">
    <property type="term" value="F:geranylgeranylglycerol-phosphate geranylgeranyltransferase activity"/>
    <property type="evidence" value="ECO:0007669"/>
    <property type="project" value="UniProtKB-UniRule"/>
</dbReference>
<dbReference type="GO" id="GO:0000287">
    <property type="term" value="F:magnesium ion binding"/>
    <property type="evidence" value="ECO:0007669"/>
    <property type="project" value="UniProtKB-UniRule"/>
</dbReference>
<dbReference type="GO" id="GO:0046474">
    <property type="term" value="P:glycerophospholipid biosynthetic process"/>
    <property type="evidence" value="ECO:0007669"/>
    <property type="project" value="UniProtKB-UniRule"/>
</dbReference>
<dbReference type="CDD" id="cd13961">
    <property type="entry name" value="PT_UbiA_DGGGPS"/>
    <property type="match status" value="1"/>
</dbReference>
<dbReference type="Gene3D" id="1.10.357.140">
    <property type="entry name" value="UbiA prenyltransferase"/>
    <property type="match status" value="1"/>
</dbReference>
<dbReference type="Gene3D" id="1.20.120.1780">
    <property type="entry name" value="UbiA prenyltransferase"/>
    <property type="match status" value="1"/>
</dbReference>
<dbReference type="HAMAP" id="MF_01286">
    <property type="entry name" value="DGGGP_synth"/>
    <property type="match status" value="1"/>
</dbReference>
<dbReference type="InterPro" id="IPR023547">
    <property type="entry name" value="DGGGP_synth"/>
</dbReference>
<dbReference type="InterPro" id="IPR050475">
    <property type="entry name" value="Prenyltransferase_related"/>
</dbReference>
<dbReference type="InterPro" id="IPR000537">
    <property type="entry name" value="UbiA_prenyltransferase"/>
</dbReference>
<dbReference type="InterPro" id="IPR044878">
    <property type="entry name" value="UbiA_sf"/>
</dbReference>
<dbReference type="NCBIfam" id="NF009522">
    <property type="entry name" value="PRK12883.1"/>
    <property type="match status" value="1"/>
</dbReference>
<dbReference type="PANTHER" id="PTHR42723">
    <property type="entry name" value="CHLOROPHYLL SYNTHASE"/>
    <property type="match status" value="1"/>
</dbReference>
<dbReference type="PANTHER" id="PTHR42723:SF1">
    <property type="entry name" value="CHLOROPHYLL SYNTHASE, CHLOROPLASTIC"/>
    <property type="match status" value="1"/>
</dbReference>
<dbReference type="Pfam" id="PF01040">
    <property type="entry name" value="UbiA"/>
    <property type="match status" value="1"/>
</dbReference>
<gene>
    <name type="ordered locus">PYRAB00300</name>
    <name type="ORF">PAB0018</name>
</gene>
<evidence type="ECO:0000255" key="1">
    <source>
        <dbReference type="HAMAP-Rule" id="MF_01286"/>
    </source>
</evidence>
<evidence type="ECO:0000305" key="2"/>
<feature type="chain" id="PRO_0000350715" description="Digeranylgeranylglyceryl phosphate synthase">
    <location>
        <begin position="1"/>
        <end position="277"/>
    </location>
</feature>
<feature type="transmembrane region" description="Helical" evidence="1">
    <location>
        <begin position="16"/>
        <end position="36"/>
    </location>
</feature>
<feature type="transmembrane region" description="Helical" evidence="1">
    <location>
        <begin position="40"/>
        <end position="60"/>
    </location>
</feature>
<feature type="transmembrane region" description="Helical" evidence="1">
    <location>
        <begin position="101"/>
        <end position="121"/>
    </location>
</feature>
<feature type="transmembrane region" description="Helical" evidence="1">
    <location>
        <begin position="129"/>
        <end position="149"/>
    </location>
</feature>
<feature type="transmembrane region" description="Helical" evidence="1">
    <location>
        <begin position="153"/>
        <end position="173"/>
    </location>
</feature>
<feature type="transmembrane region" description="Helical" evidence="1">
    <location>
        <begin position="205"/>
        <end position="225"/>
    </location>
</feature>
<feature type="transmembrane region" description="Helical" evidence="1">
    <location>
        <begin position="257"/>
        <end position="277"/>
    </location>
</feature>
<proteinExistence type="inferred from homology"/>
<comment type="function">
    <text evidence="1">Prenyltransferase that catalyzes the transfer of the geranylgeranyl moiety of geranylgeranyl diphosphate (GGPP) to the C2 hydroxyl of (S)-3-O-geranylgeranylglyceryl phosphate (GGGP). This reaction is the second ether-bond-formation step in the biosynthesis of archaeal membrane lipids.</text>
</comment>
<comment type="catalytic activity">
    <reaction evidence="1">
        <text>sn-3-O-(geranylgeranyl)glycerol 1-phosphate + (2E,6E,10E)-geranylgeranyl diphosphate = 2,3-bis-O-(geranylgeranyl)-sn-glycerol 1-phosphate + diphosphate</text>
        <dbReference type="Rhea" id="RHEA:18109"/>
        <dbReference type="ChEBI" id="CHEBI:33019"/>
        <dbReference type="ChEBI" id="CHEBI:57677"/>
        <dbReference type="ChEBI" id="CHEBI:58756"/>
        <dbReference type="ChEBI" id="CHEBI:58837"/>
        <dbReference type="EC" id="2.5.1.42"/>
    </reaction>
</comment>
<comment type="cofactor">
    <cofactor evidence="1">
        <name>Mg(2+)</name>
        <dbReference type="ChEBI" id="CHEBI:18420"/>
    </cofactor>
</comment>
<comment type="pathway">
    <text evidence="1">Membrane lipid metabolism; glycerophospholipid metabolism.</text>
</comment>
<comment type="subcellular location">
    <subcellularLocation>
        <location evidence="1">Cell membrane</location>
        <topology evidence="1">Multi-pass membrane protein</topology>
    </subcellularLocation>
</comment>
<comment type="similarity">
    <text evidence="1">Belongs to the UbiA prenyltransferase family. DGGGP synthase subfamily.</text>
</comment>
<comment type="sequence caution" evidence="2">
    <conflict type="erroneous initiation">
        <sequence resource="EMBL-CDS" id="CAB48953"/>
    </conflict>
</comment>
<organism>
    <name type="scientific">Pyrococcus abyssi (strain GE5 / Orsay)</name>
    <dbReference type="NCBI Taxonomy" id="272844"/>
    <lineage>
        <taxon>Archaea</taxon>
        <taxon>Methanobacteriati</taxon>
        <taxon>Methanobacteriota</taxon>
        <taxon>Thermococci</taxon>
        <taxon>Thermococcales</taxon>
        <taxon>Thermococcaceae</taxon>
        <taxon>Pyrococcus</taxon>
    </lineage>
</organism>
<keyword id="KW-1003">Cell membrane</keyword>
<keyword id="KW-0444">Lipid biosynthesis</keyword>
<keyword id="KW-0443">Lipid metabolism</keyword>
<keyword id="KW-0460">Magnesium</keyword>
<keyword id="KW-0472">Membrane</keyword>
<keyword id="KW-0594">Phospholipid biosynthesis</keyword>
<keyword id="KW-1208">Phospholipid metabolism</keyword>
<keyword id="KW-0808">Transferase</keyword>
<keyword id="KW-0812">Transmembrane</keyword>
<keyword id="KW-1133">Transmembrane helix</keyword>